<gene>
    <name evidence="1" type="primary">gcvP</name>
    <name type="ordered locus">SGR_6151</name>
</gene>
<organism>
    <name type="scientific">Streptomyces griseus subsp. griseus (strain JCM 4626 / CBS 651.72 / NBRC 13350 / KCC S-0626 / ISP 5235)</name>
    <dbReference type="NCBI Taxonomy" id="455632"/>
    <lineage>
        <taxon>Bacteria</taxon>
        <taxon>Bacillati</taxon>
        <taxon>Actinomycetota</taxon>
        <taxon>Actinomycetes</taxon>
        <taxon>Kitasatosporales</taxon>
        <taxon>Streptomycetaceae</taxon>
        <taxon>Streptomyces</taxon>
    </lineage>
</organism>
<accession>B1W4G3</accession>
<evidence type="ECO:0000255" key="1">
    <source>
        <dbReference type="HAMAP-Rule" id="MF_00711"/>
    </source>
</evidence>
<comment type="function">
    <text evidence="1">The glycine cleavage system catalyzes the degradation of glycine. The P protein binds the alpha-amino group of glycine through its pyridoxal phosphate cofactor; CO(2) is released and the remaining methylamine moiety is then transferred to the lipoamide cofactor of the H protein.</text>
</comment>
<comment type="catalytic activity">
    <reaction evidence="1">
        <text>N(6)-[(R)-lipoyl]-L-lysyl-[glycine-cleavage complex H protein] + glycine + H(+) = N(6)-[(R)-S(8)-aminomethyldihydrolipoyl]-L-lysyl-[glycine-cleavage complex H protein] + CO2</text>
        <dbReference type="Rhea" id="RHEA:24304"/>
        <dbReference type="Rhea" id="RHEA-COMP:10494"/>
        <dbReference type="Rhea" id="RHEA-COMP:10495"/>
        <dbReference type="ChEBI" id="CHEBI:15378"/>
        <dbReference type="ChEBI" id="CHEBI:16526"/>
        <dbReference type="ChEBI" id="CHEBI:57305"/>
        <dbReference type="ChEBI" id="CHEBI:83099"/>
        <dbReference type="ChEBI" id="CHEBI:83143"/>
        <dbReference type="EC" id="1.4.4.2"/>
    </reaction>
</comment>
<comment type="cofactor">
    <cofactor evidence="1">
        <name>pyridoxal 5'-phosphate</name>
        <dbReference type="ChEBI" id="CHEBI:597326"/>
    </cofactor>
</comment>
<comment type="subunit">
    <text evidence="1">The glycine cleavage system is composed of four proteins: P, T, L and H.</text>
</comment>
<comment type="similarity">
    <text evidence="1">Belongs to the GcvP family.</text>
</comment>
<feature type="chain" id="PRO_1000132458" description="Glycine dehydrogenase (decarboxylating)">
    <location>
        <begin position="1"/>
        <end position="961"/>
    </location>
</feature>
<feature type="modified residue" description="N6-(pyridoxal phosphate)lysine" evidence="1">
    <location>
        <position position="709"/>
    </location>
</feature>
<keyword id="KW-0560">Oxidoreductase</keyword>
<keyword id="KW-0663">Pyridoxal phosphate</keyword>
<reference key="1">
    <citation type="journal article" date="2008" name="J. Bacteriol.">
        <title>Genome sequence of the streptomycin-producing microorganism Streptomyces griseus IFO 13350.</title>
        <authorList>
            <person name="Ohnishi Y."/>
            <person name="Ishikawa J."/>
            <person name="Hara H."/>
            <person name="Suzuki H."/>
            <person name="Ikenoya M."/>
            <person name="Ikeda H."/>
            <person name="Yamashita A."/>
            <person name="Hattori M."/>
            <person name="Horinouchi S."/>
        </authorList>
    </citation>
    <scope>NUCLEOTIDE SEQUENCE [LARGE SCALE GENOMIC DNA]</scope>
    <source>
        <strain>JCM 4626 / CBS 651.72 / NBRC 13350 / KCC S-0626 / ISP 5235</strain>
    </source>
</reference>
<name>GCSP_STRGG</name>
<proteinExistence type="inferred from homology"/>
<sequence length="961" mass="102006">MTPRRTPLSQLEQGIPFEQRHIGPDAEAQAKMLAQVGYGSLDELTAAAVPDVIKSAEALNLPSARTEAEVLAELRSLADRNQVLAPMIGLGYYGTFTPPVILRNVMENPAWYTAYTPYQPEISQGRLEALLNFQTMVAELTGLPTSGASLLDEGTAAAEAMALSRRVGKVKKGVFLVDADTLPQTVAVIETRAEPTGVEVVVADLSDGIPAEIAERGVFGVLLQYPGASGAVRAIEPVIEQAHELGAIVTVAADLLALTLLTSPGALGADIAVGTTQRFGVPMGFGGPHAGFMAVREKFARSLPGRLVGVSVDADGNKAYRLALQTREQHIRREKATSNICTAQVLLAVMAGMYAVYHGPDGLRTIARRTHRFAAILADGLRSAGVDVVHGAFFDTLTVRVPGKAAGIVAEARERGVNLRLVDADHVSIACDETTTRSQISAVWAAFGAEGDIEALDAAVADALPEGLLRSDDILTHPVFHQHRSETAMLRYLRKLADRDYALDRGMIPLGSCTMKLNATAEMESITWPEFGALHPFAPADQAQGFLTLIRELEERLAEVTGYDAVSIQPNAGSQGEFAGLLAVRAYHRANGDDQRTVCLIPSSAHGTNAASAVMAGMKVVVVKTADDGEVDIADLRAKIEQHRDELAVLMITYPSTHGVFEEHVAEICGEVHDAGGQVYVDGANLNALVGLAKPGKFGGDVSHLNLHKTFCIPHGGGGPGVGPVGVRAHLAPYLPNHPLQPAAGPETGVGPISAAPWGSAGILPISWAYVRLMGGEGLKRATQVAVLAANYIAKRLEPHFPILYNGPAGLVAHECIVDLRPISKATGVSIDDVAKRLIDYGFHSPTMSFPVAGTLMIEPTESEDLAELDRFCDTMIAIRAEIEKVASGEWSADDNPLSNAPHTAAALGGDWEHGYSREEAVFPAGVSAADKYWPPVRRIDGAFGDRNLVCSCPPLDAYDD</sequence>
<protein>
    <recommendedName>
        <fullName evidence="1">Glycine dehydrogenase (decarboxylating)</fullName>
        <ecNumber evidence="1">1.4.4.2</ecNumber>
    </recommendedName>
    <alternativeName>
        <fullName evidence="1">Glycine cleavage system P-protein</fullName>
    </alternativeName>
    <alternativeName>
        <fullName evidence="1">Glycine decarboxylase</fullName>
    </alternativeName>
    <alternativeName>
        <fullName evidence="1">Glycine dehydrogenase (aminomethyl-transferring)</fullName>
    </alternativeName>
</protein>
<dbReference type="EC" id="1.4.4.2" evidence="1"/>
<dbReference type="EMBL" id="AP009493">
    <property type="protein sequence ID" value="BAG22980.1"/>
    <property type="molecule type" value="Genomic_DNA"/>
</dbReference>
<dbReference type="RefSeq" id="WP_003970467.1">
    <property type="nucleotide sequence ID" value="NC_010572.1"/>
</dbReference>
<dbReference type="SMR" id="B1W4G3"/>
<dbReference type="KEGG" id="sgr:SGR_6151"/>
<dbReference type="eggNOG" id="COG0403">
    <property type="taxonomic scope" value="Bacteria"/>
</dbReference>
<dbReference type="eggNOG" id="COG1003">
    <property type="taxonomic scope" value="Bacteria"/>
</dbReference>
<dbReference type="HOGENOM" id="CLU_004620_2_1_11"/>
<dbReference type="Proteomes" id="UP000001685">
    <property type="component" value="Chromosome"/>
</dbReference>
<dbReference type="GO" id="GO:0005829">
    <property type="term" value="C:cytosol"/>
    <property type="evidence" value="ECO:0007669"/>
    <property type="project" value="TreeGrafter"/>
</dbReference>
<dbReference type="GO" id="GO:0005960">
    <property type="term" value="C:glycine cleavage complex"/>
    <property type="evidence" value="ECO:0007669"/>
    <property type="project" value="TreeGrafter"/>
</dbReference>
<dbReference type="GO" id="GO:0016594">
    <property type="term" value="F:glycine binding"/>
    <property type="evidence" value="ECO:0007669"/>
    <property type="project" value="TreeGrafter"/>
</dbReference>
<dbReference type="GO" id="GO:0004375">
    <property type="term" value="F:glycine dehydrogenase (decarboxylating) activity"/>
    <property type="evidence" value="ECO:0007669"/>
    <property type="project" value="UniProtKB-EC"/>
</dbReference>
<dbReference type="GO" id="GO:0030170">
    <property type="term" value="F:pyridoxal phosphate binding"/>
    <property type="evidence" value="ECO:0007669"/>
    <property type="project" value="TreeGrafter"/>
</dbReference>
<dbReference type="GO" id="GO:0009058">
    <property type="term" value="P:biosynthetic process"/>
    <property type="evidence" value="ECO:0007669"/>
    <property type="project" value="UniProtKB-ARBA"/>
</dbReference>
<dbReference type="GO" id="GO:0019464">
    <property type="term" value="P:glycine decarboxylation via glycine cleavage system"/>
    <property type="evidence" value="ECO:0007669"/>
    <property type="project" value="UniProtKB-UniRule"/>
</dbReference>
<dbReference type="CDD" id="cd00613">
    <property type="entry name" value="GDC-P"/>
    <property type="match status" value="2"/>
</dbReference>
<dbReference type="FunFam" id="3.40.640.10:FF:000005">
    <property type="entry name" value="Glycine dehydrogenase (decarboxylating), mitochondrial"/>
    <property type="match status" value="1"/>
</dbReference>
<dbReference type="FunFam" id="3.90.1150.10:FF:000007">
    <property type="entry name" value="Glycine dehydrogenase (decarboxylating), mitochondrial"/>
    <property type="match status" value="1"/>
</dbReference>
<dbReference type="FunFam" id="3.40.640.10:FF:000007">
    <property type="entry name" value="glycine dehydrogenase (Decarboxylating), mitochondrial"/>
    <property type="match status" value="1"/>
</dbReference>
<dbReference type="Gene3D" id="3.90.1150.10">
    <property type="entry name" value="Aspartate Aminotransferase, domain 1"/>
    <property type="match status" value="2"/>
</dbReference>
<dbReference type="Gene3D" id="3.40.640.10">
    <property type="entry name" value="Type I PLP-dependent aspartate aminotransferase-like (Major domain)"/>
    <property type="match status" value="2"/>
</dbReference>
<dbReference type="HAMAP" id="MF_00711">
    <property type="entry name" value="GcvP"/>
    <property type="match status" value="1"/>
</dbReference>
<dbReference type="InterPro" id="IPR003437">
    <property type="entry name" value="GcvP"/>
</dbReference>
<dbReference type="InterPro" id="IPR049316">
    <property type="entry name" value="GDC-P_C"/>
</dbReference>
<dbReference type="InterPro" id="IPR049315">
    <property type="entry name" value="GDC-P_N"/>
</dbReference>
<dbReference type="InterPro" id="IPR020581">
    <property type="entry name" value="GDC_P"/>
</dbReference>
<dbReference type="InterPro" id="IPR015424">
    <property type="entry name" value="PyrdxlP-dep_Trfase"/>
</dbReference>
<dbReference type="InterPro" id="IPR015421">
    <property type="entry name" value="PyrdxlP-dep_Trfase_major"/>
</dbReference>
<dbReference type="InterPro" id="IPR015422">
    <property type="entry name" value="PyrdxlP-dep_Trfase_small"/>
</dbReference>
<dbReference type="NCBIfam" id="TIGR00461">
    <property type="entry name" value="gcvP"/>
    <property type="match status" value="1"/>
</dbReference>
<dbReference type="NCBIfam" id="NF001696">
    <property type="entry name" value="PRK00451.1"/>
    <property type="match status" value="1"/>
</dbReference>
<dbReference type="NCBIfam" id="NF003346">
    <property type="entry name" value="PRK04366.1"/>
    <property type="match status" value="1"/>
</dbReference>
<dbReference type="PANTHER" id="PTHR11773:SF1">
    <property type="entry name" value="GLYCINE DEHYDROGENASE (DECARBOXYLATING), MITOCHONDRIAL"/>
    <property type="match status" value="1"/>
</dbReference>
<dbReference type="PANTHER" id="PTHR11773">
    <property type="entry name" value="GLYCINE DEHYDROGENASE, DECARBOXYLATING"/>
    <property type="match status" value="1"/>
</dbReference>
<dbReference type="Pfam" id="PF21478">
    <property type="entry name" value="GcvP2_C"/>
    <property type="match status" value="1"/>
</dbReference>
<dbReference type="Pfam" id="PF02347">
    <property type="entry name" value="GDC-P"/>
    <property type="match status" value="2"/>
</dbReference>
<dbReference type="SUPFAM" id="SSF53383">
    <property type="entry name" value="PLP-dependent transferases"/>
    <property type="match status" value="2"/>
</dbReference>